<reference key="1">
    <citation type="journal article" date="2005" name="J. Bacteriol.">
        <title>Insights on evolution of virulence and resistance from the complete genome analysis of an early methicillin-resistant Staphylococcus aureus strain and a biofilm-producing methicillin-resistant Staphylococcus epidermidis strain.</title>
        <authorList>
            <person name="Gill S.R."/>
            <person name="Fouts D.E."/>
            <person name="Archer G.L."/>
            <person name="Mongodin E.F."/>
            <person name="DeBoy R.T."/>
            <person name="Ravel J."/>
            <person name="Paulsen I.T."/>
            <person name="Kolonay J.F."/>
            <person name="Brinkac L.M."/>
            <person name="Beanan M.J."/>
            <person name="Dodson R.J."/>
            <person name="Daugherty S.C."/>
            <person name="Madupu R."/>
            <person name="Angiuoli S.V."/>
            <person name="Durkin A.S."/>
            <person name="Haft D.H."/>
            <person name="Vamathevan J.J."/>
            <person name="Khouri H."/>
            <person name="Utterback T.R."/>
            <person name="Lee C."/>
            <person name="Dimitrov G."/>
            <person name="Jiang L."/>
            <person name="Qin H."/>
            <person name="Weidman J."/>
            <person name="Tran K."/>
            <person name="Kang K.H."/>
            <person name="Hance I.R."/>
            <person name="Nelson K.E."/>
            <person name="Fraser C.M."/>
        </authorList>
    </citation>
    <scope>NUCLEOTIDE SEQUENCE [LARGE SCALE GENOMIC DNA]</scope>
    <source>
        <strain>ATCC 35984 / DSM 28319 / BCRC 17069 / CCUG 31568 / BM 3577 / RP62A</strain>
    </source>
</reference>
<organism>
    <name type="scientific">Staphylococcus epidermidis (strain ATCC 35984 / DSM 28319 / BCRC 17069 / CCUG 31568 / BM 3577 / RP62A)</name>
    <dbReference type="NCBI Taxonomy" id="176279"/>
    <lineage>
        <taxon>Bacteria</taxon>
        <taxon>Bacillati</taxon>
        <taxon>Bacillota</taxon>
        <taxon>Bacilli</taxon>
        <taxon>Bacillales</taxon>
        <taxon>Staphylococcaceae</taxon>
        <taxon>Staphylococcus</taxon>
    </lineage>
</organism>
<dbReference type="EC" id="2.3.2.17"/>
<dbReference type="EMBL" id="CP000029">
    <property type="protein sequence ID" value="AAW54349.1"/>
    <property type="molecule type" value="Genomic_DNA"/>
</dbReference>
<dbReference type="RefSeq" id="WP_001830979.1">
    <property type="nucleotide sequence ID" value="NC_002976.3"/>
</dbReference>
<dbReference type="SMR" id="Q5HPG6"/>
<dbReference type="STRING" id="176279.SERP0946"/>
<dbReference type="KEGG" id="ser:SERP0946"/>
<dbReference type="eggNOG" id="COG2348">
    <property type="taxonomic scope" value="Bacteria"/>
</dbReference>
<dbReference type="HOGENOM" id="CLU_048411_1_0_9"/>
<dbReference type="Proteomes" id="UP000000531">
    <property type="component" value="Chromosome"/>
</dbReference>
<dbReference type="GO" id="GO:0005737">
    <property type="term" value="C:cytoplasm"/>
    <property type="evidence" value="ECO:0007669"/>
    <property type="project" value="UniProtKB-SubCell"/>
</dbReference>
<dbReference type="GO" id="GO:0016755">
    <property type="term" value="F:aminoacyltransferase activity"/>
    <property type="evidence" value="ECO:0007669"/>
    <property type="project" value="InterPro"/>
</dbReference>
<dbReference type="GO" id="GO:0000166">
    <property type="term" value="F:nucleotide binding"/>
    <property type="evidence" value="ECO:0007669"/>
    <property type="project" value="InterPro"/>
</dbReference>
<dbReference type="GO" id="GO:0071555">
    <property type="term" value="P:cell wall organization"/>
    <property type="evidence" value="ECO:0007669"/>
    <property type="project" value="UniProtKB-KW"/>
</dbReference>
<dbReference type="GO" id="GO:0009252">
    <property type="term" value="P:peptidoglycan biosynthetic process"/>
    <property type="evidence" value="ECO:0007669"/>
    <property type="project" value="UniProtKB-KW"/>
</dbReference>
<dbReference type="GO" id="GO:0008360">
    <property type="term" value="P:regulation of cell shape"/>
    <property type="evidence" value="ECO:0007669"/>
    <property type="project" value="UniProtKB-KW"/>
</dbReference>
<dbReference type="Gene3D" id="1.20.58.90">
    <property type="match status" value="1"/>
</dbReference>
<dbReference type="Gene3D" id="3.40.630.30">
    <property type="match status" value="2"/>
</dbReference>
<dbReference type="InterPro" id="IPR016181">
    <property type="entry name" value="Acyl_CoA_acyltransferase"/>
</dbReference>
<dbReference type="InterPro" id="IPR003447">
    <property type="entry name" value="FEMABX"/>
</dbReference>
<dbReference type="InterPro" id="IPR050644">
    <property type="entry name" value="PG_Glycine_Bridge_Synth"/>
</dbReference>
<dbReference type="InterPro" id="IPR010978">
    <property type="entry name" value="tRNA-bd_arm"/>
</dbReference>
<dbReference type="PANTHER" id="PTHR36174:SF2">
    <property type="entry name" value="AMINOACYLTRANSFERASE FEMA"/>
    <property type="match status" value="1"/>
</dbReference>
<dbReference type="PANTHER" id="PTHR36174">
    <property type="entry name" value="LIPID II:GLYCINE GLYCYLTRANSFERASE"/>
    <property type="match status" value="1"/>
</dbReference>
<dbReference type="Pfam" id="PF02388">
    <property type="entry name" value="FemAB"/>
    <property type="match status" value="1"/>
</dbReference>
<dbReference type="SUPFAM" id="SSF55729">
    <property type="entry name" value="Acyl-CoA N-acyltransferases (Nat)"/>
    <property type="match status" value="2"/>
</dbReference>
<dbReference type="SUPFAM" id="SSF46589">
    <property type="entry name" value="tRNA-binding arm"/>
    <property type="match status" value="1"/>
</dbReference>
<dbReference type="PROSITE" id="PS51191">
    <property type="entry name" value="FEMABX"/>
    <property type="match status" value="1"/>
</dbReference>
<gene>
    <name type="primary">femA</name>
    <name type="ordered locus">SERP0946</name>
</gene>
<name>FEMA_STAEQ</name>
<protein>
    <recommendedName>
        <fullName>Aminoacyltransferase FemA</fullName>
        <ecNumber>2.3.2.17</ecNumber>
    </recommendedName>
    <alternativeName>
        <fullName>Factor essential for expression of methicillin resistance A</fullName>
    </alternativeName>
    <alternativeName>
        <fullName>N-acetylmuramoyl-L-alanyl-D-glutamyl-L-lysyl-(N6-glycyl)-D-alanyl-D-alanine-diphosphoundecaprenyl-N-acetylglucosamine:glycine glycyltransferase</fullName>
    </alternativeName>
</protein>
<proteinExistence type="inferred from homology"/>
<evidence type="ECO:0000250" key="1"/>
<evidence type="ECO:0000305" key="2"/>
<comment type="function">
    <text evidence="1">Catalyzes the incorporation of amino acid(s) into the interchain peptide bridge of peptidoglycan, using aminoacyl-tRNA as amino acid donor.</text>
</comment>
<comment type="catalytic activity">
    <reaction>
        <text>beta-D-GlcNAc-(1-&gt;4)-Mur2Ac(oyl-L-Ala-D-isoglutaminyl-L-Lys-(N(6)-Gly)-D-Ala-D-Ala)-di-trans,octa-cis-undecaprenyl diphosphate + 2 glycyl-tRNA(Gly) = MurNAc-L-Ala-D-isoglutaminyl-L-Lys-(N(6)-tri-Gly)-D-Ala-D-Ala-diphospho-di-trans,octa-cis-undecaprenyl-GlcNAc + 2 tRNA(Gly) + 2 H(+)</text>
        <dbReference type="Rhea" id="RHEA:30439"/>
        <dbReference type="Rhea" id="RHEA-COMP:9664"/>
        <dbReference type="Rhea" id="RHEA-COMP:9683"/>
        <dbReference type="ChEBI" id="CHEBI:15378"/>
        <dbReference type="ChEBI" id="CHEBI:62234"/>
        <dbReference type="ChEBI" id="CHEBI:62235"/>
        <dbReference type="ChEBI" id="CHEBI:78442"/>
        <dbReference type="ChEBI" id="CHEBI:78522"/>
        <dbReference type="EC" id="2.3.2.17"/>
    </reaction>
</comment>
<comment type="subcellular location">
    <subcellularLocation>
        <location evidence="1">Cytoplasm</location>
    </subcellularLocation>
</comment>
<comment type="similarity">
    <text evidence="2">Belongs to the FemABX family.</text>
</comment>
<accession>Q5HPG6</accession>
<keyword id="KW-0012">Acyltransferase</keyword>
<keyword id="KW-0133">Cell shape</keyword>
<keyword id="KW-0961">Cell wall biogenesis/degradation</keyword>
<keyword id="KW-0963">Cytoplasm</keyword>
<keyword id="KW-0573">Peptidoglycan synthesis</keyword>
<keyword id="KW-1185">Reference proteome</keyword>
<keyword id="KW-0808">Transferase</keyword>
<sequence>MKFTNLTAKEFSDFTDRMTYSHFTQMEGNYELKVAEGTESHLVGIKNNDNEVIAACLLTAVPVMKIFKYFYSNRGPVIDYNNKELVHFFFNELSKYVKKYNCLYLRVDPYLPYQYLNHEGEITGNAGHDWIFDELESLGYKHEGFHKGFDPVLQIRYHSVLNLANKSANDVLKNMDGLRKRNTKKVKKNGVKVRFLSEEELPIFRSFMEDTSETKDFADREDSFYYNRFKHYKDRVLVPLAYINFDEYIEELNNERNVLNKDYNKALKDIEKRPENKKAHNKKENLEQQLDANQQKINEAKNLKQEHGNELPISAGFFIINPFEVVYYAGGTSNRYRHFAGSYAVQWKMINYAIEHGINRYNFYGISGDFSEDAEDAGVVKFKKGYDADVIEYVGDFIKPINKPMYNIYRTLKKLKK</sequence>
<feature type="chain" id="PRO_0000204737" description="Aminoacyltransferase FemA">
    <location>
        <begin position="1"/>
        <end position="417"/>
    </location>
</feature>